<dbReference type="EMBL" id="M63500">
    <property type="protein sequence ID" value="AAA30373.1"/>
    <property type="molecule type" value="mRNA"/>
</dbReference>
<dbReference type="EMBL" id="S44231">
    <property type="protein sequence ID" value="AAB23270.2"/>
    <property type="molecule type" value="mRNA"/>
</dbReference>
<dbReference type="PIR" id="A42931">
    <property type="entry name" value="A42931"/>
</dbReference>
<dbReference type="RefSeq" id="NP_776665.1">
    <property type="nucleotide sequence ID" value="NM_174240.2"/>
</dbReference>
<dbReference type="FunCoup" id="Q99004">
    <property type="interactions" value="1"/>
</dbReference>
<dbReference type="PaxDb" id="9913-ENSBTAP00000029893"/>
<dbReference type="GeneID" id="281621"/>
<dbReference type="CTD" id="266"/>
<dbReference type="eggNOG" id="ENOG502S4XP">
    <property type="taxonomic scope" value="Eukaryota"/>
</dbReference>
<dbReference type="InParanoid" id="Q99004"/>
<dbReference type="Proteomes" id="UP000009136">
    <property type="component" value="Unplaced"/>
</dbReference>
<dbReference type="GO" id="GO:0062023">
    <property type="term" value="C:collagen-containing extracellular matrix"/>
    <property type="evidence" value="ECO:0000318"/>
    <property type="project" value="GO_Central"/>
</dbReference>
<dbReference type="GO" id="GO:0005576">
    <property type="term" value="C:extracellular region"/>
    <property type="evidence" value="ECO:0007669"/>
    <property type="project" value="UniProtKB-KW"/>
</dbReference>
<dbReference type="GO" id="GO:0030345">
    <property type="term" value="F:structural constituent of tooth enamel"/>
    <property type="evidence" value="ECO:0000318"/>
    <property type="project" value="GO_Central"/>
</dbReference>
<dbReference type="GO" id="GO:0070166">
    <property type="term" value="P:enamel mineralization"/>
    <property type="evidence" value="ECO:0000318"/>
    <property type="project" value="GO_Central"/>
</dbReference>
<dbReference type="InterPro" id="IPR004116">
    <property type="entry name" value="Amelogenin"/>
</dbReference>
<dbReference type="PANTHER" id="PTHR46794:SF2">
    <property type="entry name" value="AMELOGENIN, X ISOFORM"/>
    <property type="match status" value="1"/>
</dbReference>
<dbReference type="PANTHER" id="PTHR46794">
    <property type="entry name" value="AMELOGENIN, Y ISOFORM"/>
    <property type="match status" value="1"/>
</dbReference>
<dbReference type="Pfam" id="PF02948">
    <property type="entry name" value="Amelogenin"/>
    <property type="match status" value="1"/>
</dbReference>
<dbReference type="PRINTS" id="PR01757">
    <property type="entry name" value="AMELOGENIN"/>
</dbReference>
<dbReference type="SMART" id="SM00818">
    <property type="entry name" value="Amelogenin"/>
    <property type="match status" value="1"/>
</dbReference>
<gene>
    <name type="primary">AMELY</name>
</gene>
<protein>
    <recommendedName>
        <fullName>Amelogenin, Y isoform</fullName>
    </recommendedName>
    <alternativeName>
        <fullName>Class II amelogenin</fullName>
    </alternativeName>
</protein>
<sequence length="192" mass="21753">MGTWILFACLLGAAYSMPLPPHPGHPGYINFSYEVLTPLKWYQNMLRYPYPSYGYEPVGGWLHHQIIPVVSQQSPQNHALQPHHHNPMVPAQQPVVPQQPMMPVPGQHSMTPIQHHQPNLPLPAQQSFQPQPIQPQPHQPLQPQPPVHPIQRLPPQPPLPPIFPMQPLPPVLPDLPLEAWPATDKTKREEVD</sequence>
<proteinExistence type="evidence at transcript level"/>
<keyword id="KW-0025">Alternative splicing</keyword>
<keyword id="KW-0091">Biomineralization</keyword>
<keyword id="KW-0272">Extracellular matrix</keyword>
<keyword id="KW-1185">Reference proteome</keyword>
<keyword id="KW-0677">Repeat</keyword>
<keyword id="KW-0964">Secreted</keyword>
<keyword id="KW-0732">Signal</keyword>
<name>AMELY_BOVIN</name>
<feature type="signal peptide">
    <location>
        <begin position="1"/>
        <end position="16"/>
    </location>
</feature>
<feature type="chain" id="PRO_0000001197" description="Amelogenin, Y isoform">
    <location>
        <begin position="17"/>
        <end position="192"/>
    </location>
</feature>
<feature type="region of interest" description="Disordered" evidence="1">
    <location>
        <begin position="73"/>
        <end position="192"/>
    </location>
</feature>
<feature type="compositionally biased region" description="Low complexity" evidence="1">
    <location>
        <begin position="87"/>
        <end position="105"/>
    </location>
</feature>
<feature type="compositionally biased region" description="Polar residues" evidence="1">
    <location>
        <begin position="108"/>
        <end position="117"/>
    </location>
</feature>
<feature type="compositionally biased region" description="Pro residues" evidence="1">
    <location>
        <begin position="132"/>
        <end position="173"/>
    </location>
</feature>
<reference key="1">
    <citation type="journal article" date="1991" name="Biochemistry">
        <title>Structure and expression of the bovine amelogenin gene.</title>
        <authorList>
            <person name="Gibson C."/>
            <person name="Golub E."/>
            <person name="Herold R."/>
            <person name="Risser M."/>
            <person name="Ding W."/>
            <person name="Shimokawa H."/>
            <person name="Young M."/>
            <person name="Termine J."/>
            <person name="Rosenbloom J."/>
        </authorList>
    </citation>
    <scope>PARTIAL NUCLEOTIDE SEQUENCE [MRNA]</scope>
</reference>
<reference key="2">
    <citation type="journal article" date="1992" name="Biochemistry">
        <title>Bovine amelogenin message heterogeneity: alternative splicing and Y-chromosomal gene transcription.</title>
        <authorList>
            <person name="Gibson C.W."/>
            <person name="Golub E.E."/>
            <person name="Abrams W.R."/>
            <person name="Shen G."/>
            <person name="Ding W."/>
            <person name="Rosenbloom J."/>
        </authorList>
    </citation>
    <scope>NUCLEOTIDE SEQUENCE [MRNA] OF 7-192</scope>
</reference>
<comment type="function">
    <text>Plays a role in the biomineralization of teeth. Seems to regulate the formation of crystallites during the secretory stage of tooth enamel development. Thought to play a major role in the structural organization and mineralization of developing enamel.</text>
</comment>
<comment type="subcellular location">
    <subcellularLocation>
        <location>Secreted</location>
        <location>Extracellular space</location>
        <location>Extracellular matrix</location>
    </subcellularLocation>
</comment>
<comment type="alternative products">
    <event type="alternative splicing"/>
    <isoform>
        <id>Q99004-1</id>
        <name>1</name>
        <sequence type="displayed"/>
    </isoform>
    <text>A number of isoforms are produced.</text>
</comment>
<comment type="similarity">
    <text evidence="2">Belongs to the amelogenin family.</text>
</comment>
<accession>Q99004</accession>
<organism>
    <name type="scientific">Bos taurus</name>
    <name type="common">Bovine</name>
    <dbReference type="NCBI Taxonomy" id="9913"/>
    <lineage>
        <taxon>Eukaryota</taxon>
        <taxon>Metazoa</taxon>
        <taxon>Chordata</taxon>
        <taxon>Craniata</taxon>
        <taxon>Vertebrata</taxon>
        <taxon>Euteleostomi</taxon>
        <taxon>Mammalia</taxon>
        <taxon>Eutheria</taxon>
        <taxon>Laurasiatheria</taxon>
        <taxon>Artiodactyla</taxon>
        <taxon>Ruminantia</taxon>
        <taxon>Pecora</taxon>
        <taxon>Bovidae</taxon>
        <taxon>Bovinae</taxon>
        <taxon>Bos</taxon>
    </lineage>
</organism>
<evidence type="ECO:0000256" key="1">
    <source>
        <dbReference type="SAM" id="MobiDB-lite"/>
    </source>
</evidence>
<evidence type="ECO:0000305" key="2"/>